<sequence length="118" mass="13228">MTDLIPLEQAHCLPRKGSDHKLGEARLAELLPQVPGWELAEAGMAITRTFRFADYYRTLAFVNALAWIAHREDHHPDLGVHYDRVVVRYSTHDVGGLSENDFICAAKVAQLFDQGITA</sequence>
<keyword id="KW-0456">Lyase</keyword>
<evidence type="ECO:0000255" key="1">
    <source>
        <dbReference type="HAMAP-Rule" id="MF_00434"/>
    </source>
</evidence>
<gene>
    <name type="ordered locus">XC_2102</name>
</gene>
<organism>
    <name type="scientific">Xanthomonas campestris pv. campestris (strain 8004)</name>
    <dbReference type="NCBI Taxonomy" id="314565"/>
    <lineage>
        <taxon>Bacteria</taxon>
        <taxon>Pseudomonadati</taxon>
        <taxon>Pseudomonadota</taxon>
        <taxon>Gammaproteobacteria</taxon>
        <taxon>Lysobacterales</taxon>
        <taxon>Lysobacteraceae</taxon>
        <taxon>Xanthomonas</taxon>
    </lineage>
</organism>
<protein>
    <recommendedName>
        <fullName evidence="1">Putative pterin-4-alpha-carbinolamine dehydratase</fullName>
        <shortName evidence="1">PHS</shortName>
        <ecNumber evidence="1">4.2.1.96</ecNumber>
    </recommendedName>
    <alternativeName>
        <fullName evidence="1">4-alpha-hydroxy-tetrahydropterin dehydratase</fullName>
    </alternativeName>
    <alternativeName>
        <fullName evidence="1">Pterin carbinolamine dehydratase</fullName>
        <shortName evidence="1">PCD</shortName>
    </alternativeName>
</protein>
<feature type="chain" id="PRO_0000231477" description="Putative pterin-4-alpha-carbinolamine dehydratase">
    <location>
        <begin position="1"/>
        <end position="118"/>
    </location>
</feature>
<comment type="catalytic activity">
    <reaction evidence="1">
        <text>(4aS,6R)-4a-hydroxy-L-erythro-5,6,7,8-tetrahydrobiopterin = (6R)-L-erythro-6,7-dihydrobiopterin + H2O</text>
        <dbReference type="Rhea" id="RHEA:11920"/>
        <dbReference type="ChEBI" id="CHEBI:15377"/>
        <dbReference type="ChEBI" id="CHEBI:15642"/>
        <dbReference type="ChEBI" id="CHEBI:43120"/>
        <dbReference type="EC" id="4.2.1.96"/>
    </reaction>
</comment>
<comment type="similarity">
    <text evidence="1">Belongs to the pterin-4-alpha-carbinolamine dehydratase family.</text>
</comment>
<name>PHS_XANC8</name>
<proteinExistence type="inferred from homology"/>
<dbReference type="EC" id="4.2.1.96" evidence="1"/>
<dbReference type="EMBL" id="CP000050">
    <property type="protein sequence ID" value="AAY49158.1"/>
    <property type="molecule type" value="Genomic_DNA"/>
</dbReference>
<dbReference type="RefSeq" id="WP_011037236.1">
    <property type="nucleotide sequence ID" value="NZ_CP155948.1"/>
</dbReference>
<dbReference type="SMR" id="Q4UUW5"/>
<dbReference type="KEGG" id="xcb:XC_2102"/>
<dbReference type="HOGENOM" id="CLU_081974_2_1_6"/>
<dbReference type="Proteomes" id="UP000000420">
    <property type="component" value="Chromosome"/>
</dbReference>
<dbReference type="GO" id="GO:0008124">
    <property type="term" value="F:4-alpha-hydroxytetrahydrobiopterin dehydratase activity"/>
    <property type="evidence" value="ECO:0007669"/>
    <property type="project" value="UniProtKB-UniRule"/>
</dbReference>
<dbReference type="GO" id="GO:0006729">
    <property type="term" value="P:tetrahydrobiopterin biosynthetic process"/>
    <property type="evidence" value="ECO:0007669"/>
    <property type="project" value="InterPro"/>
</dbReference>
<dbReference type="CDD" id="cd00913">
    <property type="entry name" value="PCD_DCoH_subfamily_a"/>
    <property type="match status" value="1"/>
</dbReference>
<dbReference type="Gene3D" id="3.30.1360.20">
    <property type="entry name" value="Transcriptional coactivator/pterin dehydratase"/>
    <property type="match status" value="1"/>
</dbReference>
<dbReference type="HAMAP" id="MF_00434">
    <property type="entry name" value="Pterin_4_alpha"/>
    <property type="match status" value="1"/>
</dbReference>
<dbReference type="InterPro" id="IPR036428">
    <property type="entry name" value="PCD_sf"/>
</dbReference>
<dbReference type="InterPro" id="IPR001533">
    <property type="entry name" value="Pterin_deHydtase"/>
</dbReference>
<dbReference type="NCBIfam" id="NF002019">
    <property type="entry name" value="PRK00823.1-4"/>
    <property type="match status" value="1"/>
</dbReference>
<dbReference type="PANTHER" id="PTHR12599">
    <property type="entry name" value="PTERIN-4-ALPHA-CARBINOLAMINE DEHYDRATASE"/>
    <property type="match status" value="1"/>
</dbReference>
<dbReference type="PANTHER" id="PTHR12599:SF0">
    <property type="entry name" value="PTERIN-4-ALPHA-CARBINOLAMINE DEHYDRATASE"/>
    <property type="match status" value="1"/>
</dbReference>
<dbReference type="Pfam" id="PF01329">
    <property type="entry name" value="Pterin_4a"/>
    <property type="match status" value="1"/>
</dbReference>
<dbReference type="SUPFAM" id="SSF55248">
    <property type="entry name" value="PCD-like"/>
    <property type="match status" value="1"/>
</dbReference>
<reference key="1">
    <citation type="journal article" date="2005" name="Genome Res.">
        <title>Comparative and functional genomic analyses of the pathogenicity of phytopathogen Xanthomonas campestris pv. campestris.</title>
        <authorList>
            <person name="Qian W."/>
            <person name="Jia Y."/>
            <person name="Ren S.-X."/>
            <person name="He Y.-Q."/>
            <person name="Feng J.-X."/>
            <person name="Lu L.-F."/>
            <person name="Sun Q."/>
            <person name="Ying G."/>
            <person name="Tang D.-J."/>
            <person name="Tang H."/>
            <person name="Wu W."/>
            <person name="Hao P."/>
            <person name="Wang L."/>
            <person name="Jiang B.-L."/>
            <person name="Zeng S."/>
            <person name="Gu W.-Y."/>
            <person name="Lu G."/>
            <person name="Rong L."/>
            <person name="Tian Y."/>
            <person name="Yao Z."/>
            <person name="Fu G."/>
            <person name="Chen B."/>
            <person name="Fang R."/>
            <person name="Qiang B."/>
            <person name="Chen Z."/>
            <person name="Zhao G.-P."/>
            <person name="Tang J.-L."/>
            <person name="He C."/>
        </authorList>
    </citation>
    <scope>NUCLEOTIDE SEQUENCE [LARGE SCALE GENOMIC DNA]</scope>
    <source>
        <strain>8004</strain>
    </source>
</reference>
<accession>Q4UUW5</accession>